<proteinExistence type="evidence at protein level"/>
<dbReference type="EMBL" id="AE004091">
    <property type="protein sequence ID" value="AAG06503.1"/>
    <property type="molecule type" value="Genomic_DNA"/>
</dbReference>
<dbReference type="PIR" id="F83257">
    <property type="entry name" value="F83257"/>
</dbReference>
<dbReference type="RefSeq" id="NP_251805.1">
    <property type="nucleotide sequence ID" value="NC_002516.2"/>
</dbReference>
<dbReference type="RefSeq" id="WP_003163304.1">
    <property type="nucleotide sequence ID" value="NZ_QZGE01000023.1"/>
</dbReference>
<dbReference type="PDB" id="4MAL">
    <property type="method" value="X-ray"/>
    <property type="resolution" value="2.05 A"/>
    <property type="chains" value="A/B=862-919"/>
</dbReference>
<dbReference type="PDB" id="4MBQ">
    <property type="method" value="X-ray"/>
    <property type="resolution" value="2.01 A"/>
    <property type="chains" value="A/B/C/D/E/F=862-919"/>
</dbReference>
<dbReference type="PDBsum" id="4MAL"/>
<dbReference type="PDBsum" id="4MBQ"/>
<dbReference type="SMR" id="Q9HZA6"/>
<dbReference type="STRING" id="208964.PA3115"/>
<dbReference type="PaxDb" id="208964-PA3115"/>
<dbReference type="GeneID" id="879911"/>
<dbReference type="KEGG" id="pae:PA3115"/>
<dbReference type="PATRIC" id="fig|208964.12.peg.3267"/>
<dbReference type="PseudoCAP" id="PA3115"/>
<dbReference type="HOGENOM" id="CLU_007099_1_0_6"/>
<dbReference type="InParanoid" id="Q9HZA6"/>
<dbReference type="OrthoDB" id="5298707at2"/>
<dbReference type="PhylomeDB" id="Q9HZA6"/>
<dbReference type="BioCyc" id="PAER208964:G1FZ6-3171-MONOMER"/>
<dbReference type="EvolutionaryTrace" id="Q9HZA6"/>
<dbReference type="Proteomes" id="UP000002438">
    <property type="component" value="Chromosome"/>
</dbReference>
<dbReference type="GO" id="GO:0005886">
    <property type="term" value="C:plasma membrane"/>
    <property type="evidence" value="ECO:0007669"/>
    <property type="project" value="UniProtKB-SubCell"/>
</dbReference>
<dbReference type="GO" id="GO:0015627">
    <property type="term" value="C:type II protein secretion system complex"/>
    <property type="evidence" value="ECO:0000315"/>
    <property type="project" value="PseudoCAP"/>
</dbReference>
<dbReference type="GO" id="GO:0044096">
    <property type="term" value="C:type IV pilus"/>
    <property type="evidence" value="ECO:0000315"/>
    <property type="project" value="PseudoCAP"/>
</dbReference>
<dbReference type="GO" id="GO:0042834">
    <property type="term" value="F:peptidoglycan binding"/>
    <property type="evidence" value="ECO:0000314"/>
    <property type="project" value="PseudoCAP"/>
</dbReference>
<dbReference type="CDD" id="cd00118">
    <property type="entry name" value="LysM"/>
    <property type="match status" value="1"/>
</dbReference>
<dbReference type="Gene3D" id="1.20.58.2200">
    <property type="match status" value="1"/>
</dbReference>
<dbReference type="Gene3D" id="3.10.350.10">
    <property type="entry name" value="LysM domain"/>
    <property type="match status" value="1"/>
</dbReference>
<dbReference type="Gene3D" id="1.25.40.10">
    <property type="entry name" value="Tetratricopeptide repeat domain"/>
    <property type="match status" value="1"/>
</dbReference>
<dbReference type="InterPro" id="IPR038440">
    <property type="entry name" value="FimV_C_sf"/>
</dbReference>
<dbReference type="InterPro" id="IPR018392">
    <property type="entry name" value="LysM_dom"/>
</dbReference>
<dbReference type="InterPro" id="IPR036779">
    <property type="entry name" value="LysM_dom_sf"/>
</dbReference>
<dbReference type="InterPro" id="IPR020011">
    <property type="entry name" value="Motility_prot_FimV_C"/>
</dbReference>
<dbReference type="InterPro" id="IPR020012">
    <property type="entry name" value="Motility_prot_FimV_N"/>
</dbReference>
<dbReference type="InterPro" id="IPR011990">
    <property type="entry name" value="TPR-like_helical_dom_sf"/>
</dbReference>
<dbReference type="NCBIfam" id="TIGR03505">
    <property type="entry name" value="FimV_core"/>
    <property type="match status" value="1"/>
</dbReference>
<dbReference type="NCBIfam" id="TIGR03504">
    <property type="entry name" value="FimV_Cterm"/>
    <property type="match status" value="1"/>
</dbReference>
<dbReference type="PANTHER" id="PTHR18898:SF2">
    <property type="entry name" value="NUCLEOPROTEIN TPR"/>
    <property type="match status" value="1"/>
</dbReference>
<dbReference type="PANTHER" id="PTHR18898">
    <property type="entry name" value="NUCLEOPROTEIN TPR-RELATED"/>
    <property type="match status" value="1"/>
</dbReference>
<dbReference type="SMART" id="SM00257">
    <property type="entry name" value="LysM"/>
    <property type="match status" value="1"/>
</dbReference>
<dbReference type="SUPFAM" id="SSF48452">
    <property type="entry name" value="TPR-like"/>
    <property type="match status" value="1"/>
</dbReference>
<dbReference type="PROSITE" id="PS51782">
    <property type="entry name" value="LYSM"/>
    <property type="match status" value="1"/>
</dbReference>
<reference key="1">
    <citation type="journal article" date="2000" name="Nature">
        <title>Complete genome sequence of Pseudomonas aeruginosa PAO1, an opportunistic pathogen.</title>
        <authorList>
            <person name="Stover C.K."/>
            <person name="Pham X.-Q.T."/>
            <person name="Erwin A.L."/>
            <person name="Mizoguchi S.D."/>
            <person name="Warrener P."/>
            <person name="Hickey M.J."/>
            <person name="Brinkman F.S.L."/>
            <person name="Hufnagle W.O."/>
            <person name="Kowalik D.J."/>
            <person name="Lagrou M."/>
            <person name="Garber R.L."/>
            <person name="Goltry L."/>
            <person name="Tolentino E."/>
            <person name="Westbrock-Wadman S."/>
            <person name="Yuan Y."/>
            <person name="Brody L.L."/>
            <person name="Coulter S.N."/>
            <person name="Folger K.R."/>
            <person name="Kas A."/>
            <person name="Larbig K."/>
            <person name="Lim R.M."/>
            <person name="Smith K.A."/>
            <person name="Spencer D.H."/>
            <person name="Wong G.K.-S."/>
            <person name="Wu Z."/>
            <person name="Paulsen I.T."/>
            <person name="Reizer J."/>
            <person name="Saier M.H. Jr."/>
            <person name="Hancock R.E.W."/>
            <person name="Lory S."/>
            <person name="Olson M.V."/>
        </authorList>
    </citation>
    <scope>NUCLEOTIDE SEQUENCE [LARGE SCALE GENOMIC DNA]</scope>
    <source>
        <strain>ATCC 15692 / DSM 22644 / CIP 104116 / JCM 14847 / LMG 12228 / 1C / PRS 101 / PAO1</strain>
    </source>
</reference>
<reference key="2">
    <citation type="journal article" date="2000" name="Microbiology">
        <title>Identification of a novel gene, fimV, involved in twitching motility in Pseudomonas aeruginosa.</title>
        <authorList>
            <person name="Semmler A.B."/>
            <person name="Whitchurch C.B."/>
            <person name="Leech A.J."/>
            <person name="Mattick J.S."/>
        </authorList>
    </citation>
    <scope>FUNCTION</scope>
    <scope>DISRUPTION PHENOTYPE</scope>
    <source>
        <strain>PAK</strain>
    </source>
</reference>
<reference key="3">
    <citation type="journal article" date="2010" name="Mol. Microbiol.">
        <title>The Pseudomonas aeruginosa Chp chemosensory system regulates intracellular cAMP levels by modulating adenylate cyclase activity.</title>
        <authorList>
            <person name="Fulcher N.B."/>
            <person name="Holliday P.M."/>
            <person name="Klem E."/>
            <person name="Cann M.J."/>
            <person name="Wolfgang M.C."/>
        </authorList>
    </citation>
    <scope>FUNCTION</scope>
    <scope>DISRUPTION PHENOTYPE</scope>
    <source>
        <strain>PAK</strain>
    </source>
</reference>
<reference key="4">
    <citation type="journal article" date="2011" name="J. Bacteriol.">
        <title>The peptidoglycan-binding protein FimV promotes assembly of the Pseudomonas aeruginosa type IV pilus secretin.</title>
        <authorList>
            <person name="Wehbi H."/>
            <person name="Portillo E."/>
            <person name="Harvey H."/>
            <person name="Shimkoff A.E."/>
            <person name="Scheurwater E.M."/>
            <person name="Howell P.L."/>
            <person name="Burrows L.L."/>
        </authorList>
    </citation>
    <scope>FUNCTION</scope>
    <scope>DISRUPTION PHENOTYPE</scope>
    <scope>DOMAIN</scope>
</reference>
<reference key="5">
    <citation type="journal article" date="2011" name="Microbiology">
        <title>Role of fimV in type II secretion system-dependent protein secretion of Pseudomonas aeruginosa on solid medium.</title>
        <authorList>
            <person name="Michel G.P.F."/>
            <person name="Aguzzi A."/>
            <person name="Ball G."/>
            <person name="Soscia C."/>
            <person name="Bleves S."/>
            <person name="Voulhoux R."/>
        </authorList>
    </citation>
    <scope>FUNCTION</scope>
    <scope>DISRUPTION PHENOTYPE</scope>
    <source>
        <strain>ATCC 15692 / DSM 22644 / CIP 104116 / JCM 14847 / LMG 12228 / 1C / PRS 101 / PAO1</strain>
    </source>
</reference>
<reference key="6">
    <citation type="journal article" date="2016" name="J. Bacteriol.">
        <title>The Conserved Tetratricopeptide Repeat-Containing C-Terminal Domain of Pseudomonas aeruginosa FimV Is Required for Its Cyclic AMP-Dependent and -Independent Functions.</title>
        <authorList>
            <person name="Buensuceso R.N."/>
            <person name="Nguyen Y."/>
            <person name="Zhang K."/>
            <person name="Daniel-Ivad M."/>
            <person name="Sugiman-Marangos S.N."/>
            <person name="Fleetwood A.D."/>
            <person name="Zhulin I.B."/>
            <person name="Junop M.S."/>
            <person name="Howell P.L."/>
            <person name="Burrows L.L."/>
        </authorList>
    </citation>
    <scope>FUNCTION</scope>
    <scope>DOMAIN</scope>
</reference>
<reference key="7">
    <citation type="journal article" date="2016" name="Mol. Microbiol.">
        <title>A scaffold protein connects type IV pili with the Chp chemosensory system to mediate activation of virulence signaling in Pseudomonas aeruginosa.</title>
        <authorList>
            <person name="Inclan Y.F."/>
            <person name="Persat A."/>
            <person name="Greninger A."/>
            <person name="Von Dollen J."/>
            <person name="Johnson J."/>
            <person name="Krogan N."/>
            <person name="Gitai Z."/>
            <person name="Engel J.N."/>
        </authorList>
    </citation>
    <scope>INTERACTION WITH FIML</scope>
</reference>
<reference key="8">
    <citation type="journal article" date="2017" name="J. Bacteriol.">
        <title>Cyclic AMP-Independent Control of Twitching Motility in Pseudomonas aeruginosa.</title>
        <authorList>
            <person name="Buensuceso R.N.C."/>
            <person name="Daniel-Ivad M."/>
            <person name="Kilmury S.L.N."/>
            <person name="Leighton T.L."/>
            <person name="Harvey H."/>
            <person name="Howell P.L."/>
            <person name="Burrows L.L."/>
        </authorList>
    </citation>
    <scope>FUNCTION</scope>
</reference>
<reference evidence="13 14" key="9">
    <citation type="submission" date="2013-08" db="PDB data bank">
        <title>Crystal structure of TPR2 from FimV.</title>
        <authorList>
            <person name="Daniel-Ivad M."/>
            <person name="Nguyen Y."/>
            <person name="Zhang K."/>
            <person name="Buensuceso R."/>
            <person name="Robinson H."/>
            <person name="Wolfram F."/>
            <person name="Sugiman-Marangos S.N."/>
            <person name="Junop M.S."/>
            <person name="Howell P.L."/>
            <person name="Burrows L.L."/>
        </authorList>
    </citation>
    <scope>X-RAY CRYSTALLOGRAPHY (2.05 ANGSTROMS) OF 862-919</scope>
</reference>
<keyword id="KW-0002">3D-structure</keyword>
<keyword id="KW-0997">Cell inner membrane</keyword>
<keyword id="KW-1003">Cell membrane</keyword>
<keyword id="KW-0175">Coiled coil</keyword>
<keyword id="KW-0472">Membrane</keyword>
<keyword id="KW-1185">Reference proteome</keyword>
<keyword id="KW-0732">Signal</keyword>
<keyword id="KW-0812">Transmembrane</keyword>
<keyword id="KW-1133">Transmembrane helix</keyword>
<gene>
    <name type="primary">fimV</name>
    <name type="ordered locus">PA3115</name>
</gene>
<sequence>MVRLRTLVRAIAAASVLTSGMAHGLGLGEITLKSALNQPLDAEIELLEVRDLGSGEVIPSLASPEEFSKAGVDRLYYLTDLKFTPVVKPNGKSVIRVTSSKPVQEPYLNFLVQVLWPNGRLLREYTVLLDPPLYSPQAAASAPQAPVSAPRATGAPRAPQAPAPVRTTAPAGSDTYRTVSNDTLWEIAQRNRTDRVSVPQAMLAFQELNPGAFVDGNINRLKSGQVLRIPTEQQMLERSPREALSQVQAQNQSWRGSRNPAAGSAGARQLDATQRNAAGSAPSKVDATDNLRLVSGEGKASKGADKGGKGDSKAIADTLAVTKESLDSTRRENEELQSRMQDLQSQLDKLQKLIQLKDAQLAKLQGQLGAEGQGAAQPNAALPDASQPNAAAQAPAQPGTPAAAAPTPAPAGEAPAAPAQPPVAPPPAPAAEKPPAPAVPAPAPVQAAEQPAPSFLDELLANPLWLAVIGGSALLALLVLLMILSRRNAQKEKEEAQAFAADTGEEQEDALDLGKDGFDDLTLDEPEPQVAAVAPQVEKTTAQTSDALGEADIYIAYGRFNQAAELLQNAIYDEPQRTDLRLKLMEVYAEMGDREGFARQENELREIGGAQPQVEQLKSRYPAMVAVAAVAGLAGAKLAQDELDSFSLDDLSLDDSGHAAKPDAAGQDLDDAFDLSLDDLGGDDVQADLKSDSGALDDLTLDSDLDLAASTPADKPVDDLDFGLDFAELAETPSQPKHDDLGDFSLDLDAPEDKLSDDDFLLSLNDEVPAAAPADNEFTLDTEAAEEPALSLPDDFDLSLADEPTEPAAPEKGEDSFAAQLDEVSAQLDELASNLDEPKSATPSFSAEDAAVASALDGDADDDFDFLSGADEAATKLDLARAYIDMGDSEGARDILDEVLAEGNDSQQAEARELLERLA</sequence>
<protein>
    <recommendedName>
        <fullName>Motility hub protein FimV</fullName>
    </recommendedName>
</protein>
<comment type="function">
    <text evidence="1 5 6 7 8 10 11">Inner membrane hub protein that plays both cAMP-dependent and cAMP-independent roles in twitching motility (PubMed:27297880, PubMed:28583947). Regulates intracellular cyclic AMP (cAMP) levels through the activation of adenylate cyclase CyaB (PubMed:20345659). Plays an essential role in a number of virulence mechanisms including type IV pilus (T4P)-mediated assembly and twitching motility as well as cAMP-dependent virulence gene expression (PubMed:10846211, PubMed:21097635). Also mediates type II secretion (T2S) of lipases and proteases (PubMed:21527471). In addition, mediates the cAMP-independent localization of multiple T4P structural and regulatory components to the cell poles (PubMed:21527471, PubMed:27297880, PubMed:28583947). This role in directing proteins to the cell pole is not restricted to type IV component and involves other proteins such as the diguanylate cyclase DgcP (By similarity).</text>
</comment>
<comment type="subunit">
    <text evidence="1 9">Interacts with FimL (PubMed:27145134). Interacts with DgcP (By similarity).</text>
</comment>
<comment type="subcellular location">
    <subcellularLocation>
        <location evidence="12">Cell inner membrane</location>
        <topology evidence="2">Single-pass membrane protein</topology>
    </subcellularLocation>
</comment>
<comment type="domain">
    <text evidence="7 10">The N-terminal domain binds peptidoglycans through LysM motif. In addition, this motif is required for PilQ stability and multimerization (PubMed:21097635). The cytoplasmic domain contains three discontinuous tetratricopeptide repeat (TPR) motifs involved in protein-protein interactions (PubMed:27297880).</text>
</comment>
<comment type="disruption phenotype">
    <text evidence="5 6 7">Mutants are incapable of twitching motility (PubMed:10846211, PubMed:20345659). In addition, loss of FimV dramatically reduces the levels of the PilQ secretin multimer through which pili exit the cell (PubMed:21097635).</text>
</comment>
<feature type="signal peptide" evidence="2">
    <location>
        <begin position="1"/>
        <end position="24"/>
    </location>
</feature>
<feature type="chain" id="PRO_5004331210" description="Motility hub protein FimV" evidence="2">
    <location>
        <begin position="25"/>
        <end position="919"/>
    </location>
</feature>
<feature type="transmembrane region" description="Helical" evidence="2">
    <location>
        <begin position="464"/>
        <end position="484"/>
    </location>
</feature>
<feature type="domain" description="LysM" evidence="3 7">
    <location>
        <begin position="174"/>
        <end position="229"/>
    </location>
</feature>
<feature type="region of interest" description="Disordered" evidence="4">
    <location>
        <begin position="140"/>
        <end position="177"/>
    </location>
</feature>
<feature type="region of interest" description="Disordered" evidence="4">
    <location>
        <begin position="237"/>
        <end position="312"/>
    </location>
</feature>
<feature type="region of interest" description="Disordered" evidence="4">
    <location>
        <begin position="372"/>
        <end position="445"/>
    </location>
</feature>
<feature type="region of interest" description="Disordered" evidence="4">
    <location>
        <begin position="785"/>
        <end position="816"/>
    </location>
</feature>
<feature type="coiled-coil region" evidence="2">
    <location>
        <begin position="319"/>
        <end position="367"/>
    </location>
</feature>
<feature type="compositionally biased region" description="Low complexity" evidence="4">
    <location>
        <begin position="140"/>
        <end position="171"/>
    </location>
</feature>
<feature type="compositionally biased region" description="Polar residues" evidence="4">
    <location>
        <begin position="245"/>
        <end position="256"/>
    </location>
</feature>
<feature type="compositionally biased region" description="Basic and acidic residues" evidence="4">
    <location>
        <begin position="299"/>
        <end position="312"/>
    </location>
</feature>
<feature type="compositionally biased region" description="Low complexity" evidence="4">
    <location>
        <begin position="390"/>
        <end position="417"/>
    </location>
</feature>
<feature type="compositionally biased region" description="Pro residues" evidence="4">
    <location>
        <begin position="418"/>
        <end position="443"/>
    </location>
</feature>
<feature type="helix" evidence="15">
    <location>
        <begin position="872"/>
        <end position="886"/>
    </location>
</feature>
<feature type="helix" evidence="15">
    <location>
        <begin position="889"/>
        <end position="902"/>
    </location>
</feature>
<feature type="helix" evidence="15">
    <location>
        <begin position="905"/>
        <end position="918"/>
    </location>
</feature>
<evidence type="ECO:0000250" key="1">
    <source>
        <dbReference type="UniProtKB" id="A0A0H2ZC68"/>
    </source>
</evidence>
<evidence type="ECO:0000255" key="2"/>
<evidence type="ECO:0000255" key="3">
    <source>
        <dbReference type="PROSITE-ProRule" id="PRU01118"/>
    </source>
</evidence>
<evidence type="ECO:0000256" key="4">
    <source>
        <dbReference type="SAM" id="MobiDB-lite"/>
    </source>
</evidence>
<evidence type="ECO:0000269" key="5">
    <source>
    </source>
</evidence>
<evidence type="ECO:0000269" key="6">
    <source>
    </source>
</evidence>
<evidence type="ECO:0000269" key="7">
    <source>
    </source>
</evidence>
<evidence type="ECO:0000269" key="8">
    <source>
    </source>
</evidence>
<evidence type="ECO:0000269" key="9">
    <source>
    </source>
</evidence>
<evidence type="ECO:0000269" key="10">
    <source>
    </source>
</evidence>
<evidence type="ECO:0000269" key="11">
    <source>
    </source>
</evidence>
<evidence type="ECO:0000305" key="12">
    <source>
    </source>
</evidence>
<evidence type="ECO:0007744" key="13">
    <source>
        <dbReference type="PDB" id="4MAL"/>
    </source>
</evidence>
<evidence type="ECO:0007744" key="14">
    <source>
        <dbReference type="PDB" id="4MBQ"/>
    </source>
</evidence>
<evidence type="ECO:0007829" key="15">
    <source>
        <dbReference type="PDB" id="4MBQ"/>
    </source>
</evidence>
<organism>
    <name type="scientific">Pseudomonas aeruginosa (strain ATCC 15692 / DSM 22644 / CIP 104116 / JCM 14847 / LMG 12228 / 1C / PRS 101 / PAO1)</name>
    <dbReference type="NCBI Taxonomy" id="208964"/>
    <lineage>
        <taxon>Bacteria</taxon>
        <taxon>Pseudomonadati</taxon>
        <taxon>Pseudomonadota</taxon>
        <taxon>Gammaproteobacteria</taxon>
        <taxon>Pseudomonadales</taxon>
        <taxon>Pseudomonadaceae</taxon>
        <taxon>Pseudomonas</taxon>
    </lineage>
</organism>
<name>FIMV_PSEAE</name>
<accession>Q9HZA6</accession>